<dbReference type="EMBL" id="AK013165">
    <property type="protein sequence ID" value="BAB28687.1"/>
    <property type="molecule type" value="mRNA"/>
</dbReference>
<dbReference type="EMBL" id="AK156587">
    <property type="protein sequence ID" value="BAE33768.1"/>
    <property type="molecule type" value="mRNA"/>
</dbReference>
<dbReference type="EMBL" id="CH466535">
    <property type="protein sequence ID" value="EDL35903.1"/>
    <property type="molecule type" value="Genomic_DNA"/>
</dbReference>
<dbReference type="EMBL" id="BC016102">
    <property type="protein sequence ID" value="AAH16102.1"/>
    <property type="molecule type" value="mRNA"/>
</dbReference>
<dbReference type="CCDS" id="CCDS27253.1"/>
<dbReference type="RefSeq" id="NP_001157554.1">
    <property type="nucleotide sequence ID" value="NM_001164082.1"/>
</dbReference>
<dbReference type="RefSeq" id="NP_080221.3">
    <property type="nucleotide sequence ID" value="NM_025945.3"/>
</dbReference>
<dbReference type="SMR" id="Q91WD1"/>
<dbReference type="BioGRID" id="211914">
    <property type="interactions" value="1"/>
</dbReference>
<dbReference type="FunCoup" id="Q91WD1">
    <property type="interactions" value="3515"/>
</dbReference>
<dbReference type="STRING" id="10090.ENSMUSP00000137614"/>
<dbReference type="iPTMnet" id="Q91WD1"/>
<dbReference type="PhosphoSitePlus" id="Q91WD1"/>
<dbReference type="PaxDb" id="10090-ENSMUSP00000000793"/>
<dbReference type="PeptideAtlas" id="Q91WD1"/>
<dbReference type="ProteomicsDB" id="299942"/>
<dbReference type="Pumba" id="Q91WD1"/>
<dbReference type="Antibodypedia" id="22571">
    <property type="antibodies" value="188 antibodies from 28 providers"/>
</dbReference>
<dbReference type="DNASU" id="67065"/>
<dbReference type="Ensembl" id="ENSMUST00000000793.13">
    <property type="protein sequence ID" value="ENSMUSP00000000793.6"/>
    <property type="gene ID" value="ENSMUSG00000000776.14"/>
</dbReference>
<dbReference type="Ensembl" id="ENSMUST00000180358.3">
    <property type="protein sequence ID" value="ENSMUSP00000137614.2"/>
    <property type="gene ID" value="ENSMUSG00000000776.14"/>
</dbReference>
<dbReference type="GeneID" id="67065"/>
<dbReference type="KEGG" id="mmu:67065"/>
<dbReference type="UCSC" id="uc007uny.2">
    <property type="organism name" value="mouse"/>
</dbReference>
<dbReference type="AGR" id="MGI:1914315"/>
<dbReference type="CTD" id="661"/>
<dbReference type="MGI" id="MGI:1914315">
    <property type="gene designation" value="Polr3d"/>
</dbReference>
<dbReference type="VEuPathDB" id="HostDB:ENSMUSG00000000776"/>
<dbReference type="eggNOG" id="KOG3122">
    <property type="taxonomic scope" value="Eukaryota"/>
</dbReference>
<dbReference type="GeneTree" id="ENSGT00390000013948"/>
<dbReference type="HOGENOM" id="CLU_042288_0_0_1"/>
<dbReference type="InParanoid" id="Q91WD1"/>
<dbReference type="OMA" id="GTWDKTV"/>
<dbReference type="OrthoDB" id="5836119at2759"/>
<dbReference type="PhylomeDB" id="Q91WD1"/>
<dbReference type="Reactome" id="R-MMU-76061">
    <property type="pathway name" value="RNA Polymerase III Transcription Initiation From Type 1 Promoter"/>
</dbReference>
<dbReference type="Reactome" id="R-MMU-76066">
    <property type="pathway name" value="RNA Polymerase III Transcription Initiation From Type 2 Promoter"/>
</dbReference>
<dbReference type="Reactome" id="R-MMU-76071">
    <property type="pathway name" value="RNA Polymerase III Transcription Initiation From Type 3 Promoter"/>
</dbReference>
<dbReference type="BioGRID-ORCS" id="67065">
    <property type="hits" value="24 hits in 80 CRISPR screens"/>
</dbReference>
<dbReference type="ChiTaRS" id="Polr3d">
    <property type="organism name" value="mouse"/>
</dbReference>
<dbReference type="PRO" id="PR:Q91WD1"/>
<dbReference type="Proteomes" id="UP000000589">
    <property type="component" value="Chromosome 14"/>
</dbReference>
<dbReference type="RNAct" id="Q91WD1">
    <property type="molecule type" value="protein"/>
</dbReference>
<dbReference type="Bgee" id="ENSMUSG00000000776">
    <property type="expression patterns" value="Expressed in otic placode and 222 other cell types or tissues"/>
</dbReference>
<dbReference type="GO" id="GO:0005829">
    <property type="term" value="C:cytosol"/>
    <property type="evidence" value="ECO:0007669"/>
    <property type="project" value="Ensembl"/>
</dbReference>
<dbReference type="GO" id="GO:0005654">
    <property type="term" value="C:nucleoplasm"/>
    <property type="evidence" value="ECO:0007669"/>
    <property type="project" value="Ensembl"/>
</dbReference>
<dbReference type="GO" id="GO:0005634">
    <property type="term" value="C:nucleus"/>
    <property type="evidence" value="ECO:0000305"/>
    <property type="project" value="MGI"/>
</dbReference>
<dbReference type="GO" id="GO:0005666">
    <property type="term" value="C:RNA polymerase III complex"/>
    <property type="evidence" value="ECO:0000266"/>
    <property type="project" value="MGI"/>
</dbReference>
<dbReference type="GO" id="GO:0003682">
    <property type="term" value="F:chromatin binding"/>
    <property type="evidence" value="ECO:0000314"/>
    <property type="project" value="MGI"/>
</dbReference>
<dbReference type="GO" id="GO:0003677">
    <property type="term" value="F:DNA binding"/>
    <property type="evidence" value="ECO:0007669"/>
    <property type="project" value="InterPro"/>
</dbReference>
<dbReference type="GO" id="GO:0051607">
    <property type="term" value="P:defense response to virus"/>
    <property type="evidence" value="ECO:0007669"/>
    <property type="project" value="UniProtKB-KW"/>
</dbReference>
<dbReference type="GO" id="GO:0045087">
    <property type="term" value="P:innate immune response"/>
    <property type="evidence" value="ECO:0007669"/>
    <property type="project" value="UniProtKB-KW"/>
</dbReference>
<dbReference type="GO" id="GO:0045089">
    <property type="term" value="P:positive regulation of innate immune response"/>
    <property type="evidence" value="ECO:0000250"/>
    <property type="project" value="UniProtKB"/>
</dbReference>
<dbReference type="GO" id="GO:0032728">
    <property type="term" value="P:positive regulation of interferon-beta production"/>
    <property type="evidence" value="ECO:0000250"/>
    <property type="project" value="UniProtKB"/>
</dbReference>
<dbReference type="GO" id="GO:0006383">
    <property type="term" value="P:transcription by RNA polymerase III"/>
    <property type="evidence" value="ECO:0007669"/>
    <property type="project" value="InterPro"/>
</dbReference>
<dbReference type="InterPro" id="IPR007811">
    <property type="entry name" value="RPC4"/>
</dbReference>
<dbReference type="PANTHER" id="PTHR13408">
    <property type="entry name" value="DNA-DIRECTED RNA POLYMERASE III"/>
    <property type="match status" value="1"/>
</dbReference>
<dbReference type="PANTHER" id="PTHR13408:SF0">
    <property type="entry name" value="DNA-DIRECTED RNA POLYMERASE III SUBUNIT RPC4"/>
    <property type="match status" value="1"/>
</dbReference>
<dbReference type="Pfam" id="PF05132">
    <property type="entry name" value="RNA_pol_Rpc4"/>
    <property type="match status" value="1"/>
</dbReference>
<sequence>MSEGNAAGEPSNPGGPRPLLSGGRGLIGRRPAPPLTPGRLPSIRSRDLTLGGVKKKTFTPNIISRKIKEEPKEEVTMKKEKRERDRDRQREGHGRGRGRPEVIQSHSIFEQGPAEMMKKKGNWDKTVDMSDMGPSHIINIKKEKRETDEETKQILRMLEKDDFIDDPGLKNDTRNMPVQLPLAHSGWLFKEESEEPEAKPFSAGPKEEDMEVDVPAVKVKEEPRDEEEEAKVKAPPRAARKTPGLPKDVSVAELLRELSLMKDEELLFLQLPDTLPGQPPTQDIKPVKTEVQGEDGQMVVIKQEKDREARLAENACTLADLTEGQVGKLLIRKSGKVQLLLGKVTLDVTMGTTCSFLQELVSVGLGDSRTGEMTVLGHVKHKLVCSPDFESLLDHKHR</sequence>
<evidence type="ECO:0000250" key="1"/>
<evidence type="ECO:0000250" key="2">
    <source>
        <dbReference type="UniProtKB" id="P05423"/>
    </source>
</evidence>
<evidence type="ECO:0000250" key="3">
    <source>
        <dbReference type="UniProtKB" id="P25441"/>
    </source>
</evidence>
<evidence type="ECO:0000256" key="4">
    <source>
        <dbReference type="SAM" id="MobiDB-lite"/>
    </source>
</evidence>
<evidence type="ECO:0000305" key="5"/>
<evidence type="ECO:0000312" key="6">
    <source>
        <dbReference type="MGI" id="MGI:1914315"/>
    </source>
</evidence>
<feature type="initiator methionine" description="Removed" evidence="2">
    <location>
        <position position="1"/>
    </location>
</feature>
<feature type="chain" id="PRO_0000073968" description="DNA-directed RNA polymerase III subunit RPC4">
    <location>
        <begin position="2"/>
        <end position="398"/>
    </location>
</feature>
<feature type="region of interest" description="Disordered" evidence="4">
    <location>
        <begin position="1"/>
        <end position="149"/>
    </location>
</feature>
<feature type="region of interest" description="Disordered" evidence="4">
    <location>
        <begin position="191"/>
        <end position="244"/>
    </location>
</feature>
<feature type="compositionally biased region" description="Basic and acidic residues" evidence="4">
    <location>
        <begin position="66"/>
        <end position="100"/>
    </location>
</feature>
<feature type="compositionally biased region" description="Basic and acidic residues" evidence="4">
    <location>
        <begin position="116"/>
        <end position="128"/>
    </location>
</feature>
<feature type="compositionally biased region" description="Basic and acidic residues" evidence="4">
    <location>
        <begin position="140"/>
        <end position="149"/>
    </location>
</feature>
<feature type="modified residue" description="N-acetylserine" evidence="2">
    <location>
        <position position="2"/>
    </location>
</feature>
<feature type="modified residue" description="Phosphoserine" evidence="2">
    <location>
        <position position="42"/>
    </location>
</feature>
<feature type="modified residue" description="Omega-N-methylarginine" evidence="2">
    <location>
        <position position="95"/>
    </location>
</feature>
<feature type="modified residue" description="Omega-N-methylarginine" evidence="2">
    <location>
        <position position="97"/>
    </location>
</feature>
<feature type="modified residue" description="Omega-N-methylarginine" evidence="2">
    <location>
        <position position="99"/>
    </location>
</feature>
<feature type="cross-link" description="Glycyl lysine isopeptide (Lys-Gly) (interchain with G-Cter in SUMO2)" evidence="2">
    <location>
        <position position="68"/>
    </location>
</feature>
<feature type="cross-link" description="Glycyl lysine isopeptide (Lys-Gly) (interchain with G-Cter in SUMO2)" evidence="2">
    <location>
        <position position="78"/>
    </location>
</feature>
<feature type="cross-link" description="Glycyl lysine isopeptide (Lys-Gly) (interchain with G-Cter in SUMO2)" evidence="2">
    <location>
        <position position="141"/>
    </location>
</feature>
<feature type="cross-link" description="Glycyl lysine isopeptide (Lys-Gly) (interchain with G-Cter in SUMO2)" evidence="2">
    <location>
        <position position="152"/>
    </location>
</feature>
<feature type="cross-link" description="Glycyl lysine isopeptide (Lys-Gly) (interchain with G-Cter in SUMO2)" evidence="2">
    <location>
        <position position="160"/>
    </location>
</feature>
<feature type="cross-link" description="Glycyl lysine isopeptide (Lys-Gly) (interchain with G-Cter in SUMO2)" evidence="2">
    <location>
        <position position="190"/>
    </location>
</feature>
<feature type="cross-link" description="Glycyl lysine isopeptide (Lys-Gly) (interchain with G-Cter in SUMO2)" evidence="2">
    <location>
        <position position="199"/>
    </location>
</feature>
<feature type="cross-link" description="Glycyl lysine isopeptide (Lys-Gly) (interchain with G-Cter in SUMO2)" evidence="2">
    <location>
        <position position="206"/>
    </location>
</feature>
<feature type="cross-link" description="Glycyl lysine isopeptide (Lys-Gly) (interchain with G-Cter in SUMO2)" evidence="2">
    <location>
        <position position="220"/>
    </location>
</feature>
<feature type="cross-link" description="Glycyl lysine isopeptide (Lys-Gly) (interchain with G-Cter in SUMO2)" evidence="2">
    <location>
        <position position="285"/>
    </location>
</feature>
<feature type="cross-link" description="Glycyl lysine isopeptide (Lys-Gly) (interchain with G-Cter in SUMO2)" evidence="2">
    <location>
        <position position="302"/>
    </location>
</feature>
<feature type="cross-link" description="Glycyl lysine isopeptide (Lys-Gly) (interchain with G-Cter in SUMO2)" evidence="2">
    <location>
        <position position="396"/>
    </location>
</feature>
<feature type="sequence conflict" description="In Ref. 3; AAH16102." evidence="5" ref="3">
    <original>F</original>
    <variation>L</variation>
    <location>
        <position position="201"/>
    </location>
</feature>
<keyword id="KW-0007">Acetylation</keyword>
<keyword id="KW-0051">Antiviral defense</keyword>
<keyword id="KW-0240">DNA-directed RNA polymerase</keyword>
<keyword id="KW-0391">Immunity</keyword>
<keyword id="KW-0399">Innate immunity</keyword>
<keyword id="KW-1017">Isopeptide bond</keyword>
<keyword id="KW-0488">Methylation</keyword>
<keyword id="KW-0539">Nucleus</keyword>
<keyword id="KW-0597">Phosphoprotein</keyword>
<keyword id="KW-1185">Reference proteome</keyword>
<keyword id="KW-0804">Transcription</keyword>
<keyword id="KW-0832">Ubl conjugation</keyword>
<organism>
    <name type="scientific">Mus musculus</name>
    <name type="common">Mouse</name>
    <dbReference type="NCBI Taxonomy" id="10090"/>
    <lineage>
        <taxon>Eukaryota</taxon>
        <taxon>Metazoa</taxon>
        <taxon>Chordata</taxon>
        <taxon>Craniata</taxon>
        <taxon>Vertebrata</taxon>
        <taxon>Euteleostomi</taxon>
        <taxon>Mammalia</taxon>
        <taxon>Eutheria</taxon>
        <taxon>Euarchontoglires</taxon>
        <taxon>Glires</taxon>
        <taxon>Rodentia</taxon>
        <taxon>Myomorpha</taxon>
        <taxon>Muroidea</taxon>
        <taxon>Muridae</taxon>
        <taxon>Murinae</taxon>
        <taxon>Mus</taxon>
        <taxon>Mus</taxon>
    </lineage>
</organism>
<reference key="1">
    <citation type="journal article" date="2005" name="Science">
        <title>The transcriptional landscape of the mammalian genome.</title>
        <authorList>
            <person name="Carninci P."/>
            <person name="Kasukawa T."/>
            <person name="Katayama S."/>
            <person name="Gough J."/>
            <person name="Frith M.C."/>
            <person name="Maeda N."/>
            <person name="Oyama R."/>
            <person name="Ravasi T."/>
            <person name="Lenhard B."/>
            <person name="Wells C."/>
            <person name="Kodzius R."/>
            <person name="Shimokawa K."/>
            <person name="Bajic V.B."/>
            <person name="Brenner S.E."/>
            <person name="Batalov S."/>
            <person name="Forrest A.R."/>
            <person name="Zavolan M."/>
            <person name="Davis M.J."/>
            <person name="Wilming L.G."/>
            <person name="Aidinis V."/>
            <person name="Allen J.E."/>
            <person name="Ambesi-Impiombato A."/>
            <person name="Apweiler R."/>
            <person name="Aturaliya R.N."/>
            <person name="Bailey T.L."/>
            <person name="Bansal M."/>
            <person name="Baxter L."/>
            <person name="Beisel K.W."/>
            <person name="Bersano T."/>
            <person name="Bono H."/>
            <person name="Chalk A.M."/>
            <person name="Chiu K.P."/>
            <person name="Choudhary V."/>
            <person name="Christoffels A."/>
            <person name="Clutterbuck D.R."/>
            <person name="Crowe M.L."/>
            <person name="Dalla E."/>
            <person name="Dalrymple B.P."/>
            <person name="de Bono B."/>
            <person name="Della Gatta G."/>
            <person name="di Bernardo D."/>
            <person name="Down T."/>
            <person name="Engstrom P."/>
            <person name="Fagiolini M."/>
            <person name="Faulkner G."/>
            <person name="Fletcher C.F."/>
            <person name="Fukushima T."/>
            <person name="Furuno M."/>
            <person name="Futaki S."/>
            <person name="Gariboldi M."/>
            <person name="Georgii-Hemming P."/>
            <person name="Gingeras T.R."/>
            <person name="Gojobori T."/>
            <person name="Green R.E."/>
            <person name="Gustincich S."/>
            <person name="Harbers M."/>
            <person name="Hayashi Y."/>
            <person name="Hensch T.K."/>
            <person name="Hirokawa N."/>
            <person name="Hill D."/>
            <person name="Huminiecki L."/>
            <person name="Iacono M."/>
            <person name="Ikeo K."/>
            <person name="Iwama A."/>
            <person name="Ishikawa T."/>
            <person name="Jakt M."/>
            <person name="Kanapin A."/>
            <person name="Katoh M."/>
            <person name="Kawasawa Y."/>
            <person name="Kelso J."/>
            <person name="Kitamura H."/>
            <person name="Kitano H."/>
            <person name="Kollias G."/>
            <person name="Krishnan S.P."/>
            <person name="Kruger A."/>
            <person name="Kummerfeld S.K."/>
            <person name="Kurochkin I.V."/>
            <person name="Lareau L.F."/>
            <person name="Lazarevic D."/>
            <person name="Lipovich L."/>
            <person name="Liu J."/>
            <person name="Liuni S."/>
            <person name="McWilliam S."/>
            <person name="Madan Babu M."/>
            <person name="Madera M."/>
            <person name="Marchionni L."/>
            <person name="Matsuda H."/>
            <person name="Matsuzawa S."/>
            <person name="Miki H."/>
            <person name="Mignone F."/>
            <person name="Miyake S."/>
            <person name="Morris K."/>
            <person name="Mottagui-Tabar S."/>
            <person name="Mulder N."/>
            <person name="Nakano N."/>
            <person name="Nakauchi H."/>
            <person name="Ng P."/>
            <person name="Nilsson R."/>
            <person name="Nishiguchi S."/>
            <person name="Nishikawa S."/>
            <person name="Nori F."/>
            <person name="Ohara O."/>
            <person name="Okazaki Y."/>
            <person name="Orlando V."/>
            <person name="Pang K.C."/>
            <person name="Pavan W.J."/>
            <person name="Pavesi G."/>
            <person name="Pesole G."/>
            <person name="Petrovsky N."/>
            <person name="Piazza S."/>
            <person name="Reed J."/>
            <person name="Reid J.F."/>
            <person name="Ring B.Z."/>
            <person name="Ringwald M."/>
            <person name="Rost B."/>
            <person name="Ruan Y."/>
            <person name="Salzberg S.L."/>
            <person name="Sandelin A."/>
            <person name="Schneider C."/>
            <person name="Schoenbach C."/>
            <person name="Sekiguchi K."/>
            <person name="Semple C.A."/>
            <person name="Seno S."/>
            <person name="Sessa L."/>
            <person name="Sheng Y."/>
            <person name="Shibata Y."/>
            <person name="Shimada H."/>
            <person name="Shimada K."/>
            <person name="Silva D."/>
            <person name="Sinclair B."/>
            <person name="Sperling S."/>
            <person name="Stupka E."/>
            <person name="Sugiura K."/>
            <person name="Sultana R."/>
            <person name="Takenaka Y."/>
            <person name="Taki K."/>
            <person name="Tammoja K."/>
            <person name="Tan S.L."/>
            <person name="Tang S."/>
            <person name="Taylor M.S."/>
            <person name="Tegner J."/>
            <person name="Teichmann S.A."/>
            <person name="Ueda H.R."/>
            <person name="van Nimwegen E."/>
            <person name="Verardo R."/>
            <person name="Wei C.L."/>
            <person name="Yagi K."/>
            <person name="Yamanishi H."/>
            <person name="Zabarovsky E."/>
            <person name="Zhu S."/>
            <person name="Zimmer A."/>
            <person name="Hide W."/>
            <person name="Bult C."/>
            <person name="Grimmond S.M."/>
            <person name="Teasdale R.D."/>
            <person name="Liu E.T."/>
            <person name="Brusic V."/>
            <person name="Quackenbush J."/>
            <person name="Wahlestedt C."/>
            <person name="Mattick J.S."/>
            <person name="Hume D.A."/>
            <person name="Kai C."/>
            <person name="Sasaki D."/>
            <person name="Tomaru Y."/>
            <person name="Fukuda S."/>
            <person name="Kanamori-Katayama M."/>
            <person name="Suzuki M."/>
            <person name="Aoki J."/>
            <person name="Arakawa T."/>
            <person name="Iida J."/>
            <person name="Imamura K."/>
            <person name="Itoh M."/>
            <person name="Kato T."/>
            <person name="Kawaji H."/>
            <person name="Kawagashira N."/>
            <person name="Kawashima T."/>
            <person name="Kojima M."/>
            <person name="Kondo S."/>
            <person name="Konno H."/>
            <person name="Nakano K."/>
            <person name="Ninomiya N."/>
            <person name="Nishio T."/>
            <person name="Okada M."/>
            <person name="Plessy C."/>
            <person name="Shibata K."/>
            <person name="Shiraki T."/>
            <person name="Suzuki S."/>
            <person name="Tagami M."/>
            <person name="Waki K."/>
            <person name="Watahiki A."/>
            <person name="Okamura-Oho Y."/>
            <person name="Suzuki H."/>
            <person name="Kawai J."/>
            <person name="Hayashizaki Y."/>
        </authorList>
    </citation>
    <scope>NUCLEOTIDE SEQUENCE [LARGE SCALE MRNA]</scope>
    <source>
        <strain>C57BL/6J</strain>
        <strain>NOD</strain>
        <tissue>Embryo</tissue>
        <tissue>Spleen</tissue>
    </source>
</reference>
<reference key="2">
    <citation type="submission" date="2005-09" db="EMBL/GenBank/DDBJ databases">
        <authorList>
            <person name="Mural R.J."/>
            <person name="Adams M.D."/>
            <person name="Myers E.W."/>
            <person name="Smith H.O."/>
            <person name="Venter J.C."/>
        </authorList>
    </citation>
    <scope>NUCLEOTIDE SEQUENCE [LARGE SCALE GENOMIC DNA]</scope>
</reference>
<reference key="3">
    <citation type="journal article" date="2004" name="Genome Res.">
        <title>The status, quality, and expansion of the NIH full-length cDNA project: the Mammalian Gene Collection (MGC).</title>
        <authorList>
            <consortium name="The MGC Project Team"/>
        </authorList>
    </citation>
    <scope>NUCLEOTIDE SEQUENCE [LARGE SCALE MRNA]</scope>
    <source>
        <tissue>Salivary gland</tissue>
    </source>
</reference>
<name>RPC4_MOUSE</name>
<accession>Q91WD1</accession>
<accession>Q3U0T3</accession>
<accession>Q9CZ02</accession>
<protein>
    <recommendedName>
        <fullName>DNA-directed RNA polymerase III subunit RPC4</fullName>
        <shortName>RNA polymerase III subunit C4</shortName>
    </recommendedName>
    <alternativeName>
        <fullName>DNA-directed RNA polymerase III subunit D</fullName>
    </alternativeName>
</protein>
<gene>
    <name evidence="6" type="primary">Polr3d</name>
    <name type="synonym">Bn51t</name>
</gene>
<comment type="function">
    <text evidence="2 3">DNA-dependent RNA polymerase catalyzes the transcription of DNA into RNA using the four ribonucleoside triphosphates as substrates (By similarity). Specific peripheric component of RNA polymerase III (Pol III) which synthesizes small non-coding RNAs including 5S rRNA, snRNAs, tRNAs and miRNAs from at least 500 distinct genomic loci. Enables recruitment of Pol III at transcription initiation site and drives transcription initiation from both type 2 and type 3 DNA promoters. Required for efficient transcription termination and reinitiation (By similarity). Pol III plays a key role in sensing and limiting infection by intracellular bacteria and DNA viruses. Acts as nuclear and cytosolic DNA sensor involved in innate immune response. Can sense non-self dsDNA that serves as template for transcription into dsRNA. The non-self RNA polymerase III transcripts, such as Epstein-Barr virus-encoded RNAs (EBERs) induce type I interferon and NF-kappa-B through the RIG-I pathway (By similarity).</text>
</comment>
<comment type="subunit">
    <text evidence="2">Component of the RNA polymerase III complex consisting of 17 subunits: a ten-subunit horseshoe-shaped catalytic core composed of POLR3A/RPC1, POLR3B/RPC2, POLR1C/RPAC1, POLR1D/RPAC2, POLR3K/RPC10, POLR2E/RPABC1, POLR2F/RPABC2, POLR2H/RPABC3, POLR2K/RPABC4 and POLR2L/RPABC5; a mobile stalk composed of two subunits POLR3H/RPC8 and CRCP/RPC9, protruding from the core and functioning primarily in transcription initiation; and additional subunits homologous to general transcription factors of the RNA polymerase II machinery, POLR3C/RPC3-POLR3F/RPC6-POLR3G/RPC7 heterotrimer required for transcription initiation and POLR3D/RPC4-POLR3E/RPC5 heterodimer involved in both transcription initiation and termination.</text>
</comment>
<comment type="subcellular location">
    <subcellularLocation>
        <location evidence="1">Nucleus</location>
    </subcellularLocation>
</comment>
<comment type="PTM">
    <text evidence="2">Sumoylation on Lys-141 can serve as a signal to mark misfolded Pol III for proteasomal degradation.</text>
</comment>
<comment type="similarity">
    <text evidence="5">Belongs to the eukaryotic RPC4/POLR3D RNA polymerase subunit family.</text>
</comment>
<proteinExistence type="evidence at transcript level"/>